<name>O1078_RAT</name>
<gene>
    <name type="primary">Olr1078</name>
</gene>
<organism>
    <name type="scientific">Rattus norvegicus</name>
    <name type="common">Rat</name>
    <dbReference type="NCBI Taxonomy" id="10116"/>
    <lineage>
        <taxon>Eukaryota</taxon>
        <taxon>Metazoa</taxon>
        <taxon>Chordata</taxon>
        <taxon>Craniata</taxon>
        <taxon>Vertebrata</taxon>
        <taxon>Euteleostomi</taxon>
        <taxon>Mammalia</taxon>
        <taxon>Eutheria</taxon>
        <taxon>Euarchontoglires</taxon>
        <taxon>Glires</taxon>
        <taxon>Rodentia</taxon>
        <taxon>Myomorpha</taxon>
        <taxon>Muroidea</taxon>
        <taxon>Muridae</taxon>
        <taxon>Murinae</taxon>
        <taxon>Rattus</taxon>
    </lineage>
</organism>
<comment type="function">
    <text evidence="3">Odorant receptor.</text>
</comment>
<comment type="subcellular location">
    <subcellularLocation>
        <location>Cell membrane</location>
        <topology>Multi-pass membrane protein</topology>
    </subcellularLocation>
</comment>
<comment type="tissue specificity">
    <text>Olfactory epithelium.</text>
</comment>
<comment type="similarity">
    <text evidence="2">Belongs to the G-protein coupled receptor 1 family.</text>
</comment>
<feature type="chain" id="PRO_0000150872" description="Olfactory receptor 1078">
    <location>
        <begin position="1"/>
        <end position="333"/>
    </location>
</feature>
<feature type="topological domain" description="Extracellular" evidence="1">
    <location>
        <begin position="1"/>
        <end position="25"/>
    </location>
</feature>
<feature type="transmembrane region" description="Helical; Name=1" evidence="1">
    <location>
        <begin position="26"/>
        <end position="50"/>
    </location>
</feature>
<feature type="topological domain" description="Cytoplasmic" evidence="1">
    <location>
        <begin position="51"/>
        <end position="57"/>
    </location>
</feature>
<feature type="transmembrane region" description="Helical; Name=2" evidence="1">
    <location>
        <begin position="58"/>
        <end position="79"/>
    </location>
</feature>
<feature type="topological domain" description="Extracellular" evidence="1">
    <location>
        <begin position="80"/>
        <end position="100"/>
    </location>
</feature>
<feature type="transmembrane region" description="Helical; Name=3" evidence="1">
    <location>
        <begin position="101"/>
        <end position="120"/>
    </location>
</feature>
<feature type="topological domain" description="Cytoplasmic" evidence="1">
    <location>
        <begin position="121"/>
        <end position="139"/>
    </location>
</feature>
<feature type="transmembrane region" description="Helical; Name=4" evidence="1">
    <location>
        <begin position="140"/>
        <end position="158"/>
    </location>
</feature>
<feature type="topological domain" description="Extracellular" evidence="1">
    <location>
        <begin position="159"/>
        <end position="196"/>
    </location>
</feature>
<feature type="transmembrane region" description="Helical; Name=5" evidence="1">
    <location>
        <begin position="197"/>
        <end position="219"/>
    </location>
</feature>
<feature type="topological domain" description="Cytoplasmic" evidence="1">
    <location>
        <begin position="220"/>
        <end position="236"/>
    </location>
</feature>
<feature type="transmembrane region" description="Helical; Name=6" evidence="1">
    <location>
        <begin position="237"/>
        <end position="260"/>
    </location>
</feature>
<feature type="topological domain" description="Extracellular" evidence="1">
    <location>
        <begin position="261"/>
        <end position="272"/>
    </location>
</feature>
<feature type="transmembrane region" description="Helical; Name=7" evidence="1">
    <location>
        <begin position="273"/>
        <end position="292"/>
    </location>
</feature>
<feature type="topological domain" description="Cytoplasmic" evidence="1">
    <location>
        <begin position="293"/>
        <end position="333"/>
    </location>
</feature>
<feature type="glycosylation site" description="N-linked (GlcNAc...) asparagine" evidence="1">
    <location>
        <position position="5"/>
    </location>
</feature>
<feature type="disulfide bond" evidence="2">
    <location>
        <begin position="97"/>
        <end position="189"/>
    </location>
</feature>
<reference key="1">
    <citation type="journal article" date="1991" name="Cell">
        <title>A novel multigene family may encode odorant receptors: a molecular basis for odor recognition.</title>
        <authorList>
            <person name="Buck L."/>
            <person name="Axel R."/>
        </authorList>
    </citation>
    <scope>NUCLEOTIDE SEQUENCE [MRNA]</scope>
</reference>
<accession>P23265</accession>
<sequence>MDSSNRTRVSEFLLLGFVENKDLQPLIYGLFLSMYLVTVIGNISIIVAIISDPCLHTPMYFFLSNLSFVDICFISTTVPKMLVNIQTQNNVITYAGCITQIYFFLLFVELDNFLLTIMAYDRYVAICHPMHYTVIMNYKLCGFLVLVSWIVSVLHALFQSLMMLALPFCTHLEIPHYFCEPNQVIQLTCSDAFLNDLVIYFTLVLLATVPLAGIFYSYFKIVSSICAISSVHGKYKAFSTCASHLSVVSLFYCTGLGVYLSSAANNSSQASATASVMYTVVTPMVNPFIYSLRNKDVKSVLKKTLCEEVIRSPPSLLHFFLVLCHLPCFIFCY</sequence>
<evidence type="ECO:0000255" key="1"/>
<evidence type="ECO:0000255" key="2">
    <source>
        <dbReference type="PROSITE-ProRule" id="PRU00521"/>
    </source>
</evidence>
<evidence type="ECO:0000305" key="3"/>
<protein>
    <recommendedName>
        <fullName>Olfactory receptor 1078</fullName>
    </recommendedName>
    <alternativeName>
        <fullName>Olfactory receptor-like protein F3</fullName>
    </alternativeName>
</protein>
<proteinExistence type="evidence at transcript level"/>
<keyword id="KW-1003">Cell membrane</keyword>
<keyword id="KW-1015">Disulfide bond</keyword>
<keyword id="KW-0297">G-protein coupled receptor</keyword>
<keyword id="KW-0325">Glycoprotein</keyword>
<keyword id="KW-0472">Membrane</keyword>
<keyword id="KW-0552">Olfaction</keyword>
<keyword id="KW-0675">Receptor</keyword>
<keyword id="KW-1185">Reference proteome</keyword>
<keyword id="KW-0716">Sensory transduction</keyword>
<keyword id="KW-0807">Transducer</keyword>
<keyword id="KW-0812">Transmembrane</keyword>
<keyword id="KW-1133">Transmembrane helix</keyword>
<dbReference type="EMBL" id="M64376">
    <property type="protein sequence ID" value="AAA41739.1"/>
    <property type="molecule type" value="mRNA"/>
</dbReference>
<dbReference type="PIR" id="A23701">
    <property type="entry name" value="A23701"/>
</dbReference>
<dbReference type="RefSeq" id="NP_997480.1">
    <property type="nucleotide sequence ID" value="NM_207597.1"/>
</dbReference>
<dbReference type="SMR" id="P23265"/>
<dbReference type="FunCoup" id="P23265">
    <property type="interactions" value="1004"/>
</dbReference>
<dbReference type="STRING" id="10116.ENSRNOP00000074563"/>
<dbReference type="GlyCosmos" id="P23265">
    <property type="glycosylation" value="1 site, No reported glycans"/>
</dbReference>
<dbReference type="GlyGen" id="P23265">
    <property type="glycosylation" value="1 site"/>
</dbReference>
<dbReference type="GeneID" id="299593"/>
<dbReference type="KEGG" id="rno:299593"/>
<dbReference type="UCSC" id="RGD:1333657">
    <property type="organism name" value="rat"/>
</dbReference>
<dbReference type="AGR" id="RGD:1333657"/>
<dbReference type="CTD" id="259044"/>
<dbReference type="RGD" id="1333657">
    <property type="gene designation" value="Olr1078"/>
</dbReference>
<dbReference type="InParanoid" id="P23265"/>
<dbReference type="PhylomeDB" id="P23265"/>
<dbReference type="PRO" id="PR:P23265"/>
<dbReference type="Proteomes" id="UP000002494">
    <property type="component" value="Unplaced"/>
</dbReference>
<dbReference type="GO" id="GO:0005886">
    <property type="term" value="C:plasma membrane"/>
    <property type="evidence" value="ECO:0000318"/>
    <property type="project" value="GO_Central"/>
</dbReference>
<dbReference type="GO" id="GO:0004930">
    <property type="term" value="F:G protein-coupled receptor activity"/>
    <property type="evidence" value="ECO:0007669"/>
    <property type="project" value="UniProtKB-KW"/>
</dbReference>
<dbReference type="GO" id="GO:0004984">
    <property type="term" value="F:olfactory receptor activity"/>
    <property type="evidence" value="ECO:0000318"/>
    <property type="project" value="GO_Central"/>
</dbReference>
<dbReference type="GO" id="GO:0007165">
    <property type="term" value="P:signal transduction"/>
    <property type="evidence" value="ECO:0000318"/>
    <property type="project" value="GO_Central"/>
</dbReference>
<dbReference type="CDD" id="cd15234">
    <property type="entry name" value="7tmA_OR7-like"/>
    <property type="match status" value="1"/>
</dbReference>
<dbReference type="FunFam" id="1.10.1220.70:FF:000001">
    <property type="entry name" value="Olfactory receptor"/>
    <property type="match status" value="1"/>
</dbReference>
<dbReference type="FunFam" id="1.20.1070.10:FF:000009">
    <property type="entry name" value="Olfactory receptor"/>
    <property type="match status" value="1"/>
</dbReference>
<dbReference type="Gene3D" id="1.20.1070.10">
    <property type="entry name" value="Rhodopsin 7-helix transmembrane proteins"/>
    <property type="match status" value="1"/>
</dbReference>
<dbReference type="InterPro" id="IPR000276">
    <property type="entry name" value="GPCR_Rhodpsn"/>
</dbReference>
<dbReference type="InterPro" id="IPR017452">
    <property type="entry name" value="GPCR_Rhodpsn_7TM"/>
</dbReference>
<dbReference type="InterPro" id="IPR000725">
    <property type="entry name" value="Olfact_rcpt"/>
</dbReference>
<dbReference type="PANTHER" id="PTHR48001">
    <property type="entry name" value="OLFACTORY RECEPTOR"/>
    <property type="match status" value="1"/>
</dbReference>
<dbReference type="Pfam" id="PF13853">
    <property type="entry name" value="7tm_4"/>
    <property type="match status" value="1"/>
</dbReference>
<dbReference type="PRINTS" id="PR00237">
    <property type="entry name" value="GPCRRHODOPSN"/>
</dbReference>
<dbReference type="PRINTS" id="PR00245">
    <property type="entry name" value="OLFACTORYR"/>
</dbReference>
<dbReference type="SUPFAM" id="SSF81321">
    <property type="entry name" value="Family A G protein-coupled receptor-like"/>
    <property type="match status" value="1"/>
</dbReference>
<dbReference type="PROSITE" id="PS00237">
    <property type="entry name" value="G_PROTEIN_RECEP_F1_1"/>
    <property type="match status" value="1"/>
</dbReference>
<dbReference type="PROSITE" id="PS50262">
    <property type="entry name" value="G_PROTEIN_RECEP_F1_2"/>
    <property type="match status" value="1"/>
</dbReference>